<dbReference type="EMBL" id="AE005174">
    <property type="protein sequence ID" value="AAG57825.1"/>
    <property type="molecule type" value="Genomic_DNA"/>
</dbReference>
<dbReference type="EMBL" id="BA000007">
    <property type="protein sequence ID" value="BAB36997.1"/>
    <property type="molecule type" value="Genomic_DNA"/>
</dbReference>
<dbReference type="PIR" id="F91075">
    <property type="entry name" value="F91075"/>
</dbReference>
<dbReference type="RefSeq" id="NP_311601.1">
    <property type="nucleotide sequence ID" value="NC_002695.1"/>
</dbReference>
<dbReference type="RefSeq" id="WP_001291921.1">
    <property type="nucleotide sequence ID" value="NZ_VOAI01000003.1"/>
</dbReference>
<dbReference type="STRING" id="155864.Z4026"/>
<dbReference type="GeneID" id="75203128"/>
<dbReference type="GeneID" id="914704"/>
<dbReference type="KEGG" id="ece:Z4026"/>
<dbReference type="KEGG" id="ecs:ECs_3574"/>
<dbReference type="PATRIC" id="fig|386585.9.peg.3735"/>
<dbReference type="eggNOG" id="ENOG502ZBMB">
    <property type="taxonomic scope" value="Bacteria"/>
</dbReference>
<dbReference type="HOGENOM" id="CLU_121340_0_0_6"/>
<dbReference type="OMA" id="YLMVRRH"/>
<dbReference type="Proteomes" id="UP000000558">
    <property type="component" value="Chromosome"/>
</dbReference>
<dbReference type="Proteomes" id="UP000002519">
    <property type="component" value="Chromosome"/>
</dbReference>
<dbReference type="InterPro" id="IPR010005">
    <property type="entry name" value="Formate_DH_maturation_HycH"/>
</dbReference>
<dbReference type="NCBIfam" id="NF011664">
    <property type="entry name" value="PRK15084.1"/>
    <property type="match status" value="1"/>
</dbReference>
<dbReference type="Pfam" id="PF07450">
    <property type="entry name" value="HycH"/>
    <property type="match status" value="1"/>
</dbReference>
<sequence>MSEKVVFSQLSRKFIDENDATPAEAQQVVYYSLAIGHHLGVIDCLEAALTCPWDEYLAWIATLEAGSEARRKMEGVPKYGEIVIDINHVPMLANAFDKARAAQTSQQQEWSTMLLSMLHDIHQENAIYLMVRRLRD</sequence>
<accession>P0AEV8</accession>
<accession>P16434</accession>
<name>HYCH_ECO57</name>
<gene>
    <name type="primary">hycH</name>
    <name type="ordered locus">Z4026</name>
    <name type="ordered locus">ECs3574</name>
</gene>
<feature type="chain" id="PRO_0000084104" description="Formate hydrogenlyase maturation protein HycH">
    <location>
        <begin position="1"/>
        <end position="136"/>
    </location>
</feature>
<keyword id="KW-1185">Reference proteome</keyword>
<protein>
    <recommendedName>
        <fullName>Formate hydrogenlyase maturation protein HycH</fullName>
    </recommendedName>
</protein>
<evidence type="ECO:0000250" key="1"/>
<evidence type="ECO:0000305" key="2"/>
<proteinExistence type="inferred from homology"/>
<reference key="1">
    <citation type="journal article" date="2001" name="Nature">
        <title>Genome sequence of enterohaemorrhagic Escherichia coli O157:H7.</title>
        <authorList>
            <person name="Perna N.T."/>
            <person name="Plunkett G. III"/>
            <person name="Burland V."/>
            <person name="Mau B."/>
            <person name="Glasner J.D."/>
            <person name="Rose D.J."/>
            <person name="Mayhew G.F."/>
            <person name="Evans P.S."/>
            <person name="Gregor J."/>
            <person name="Kirkpatrick H.A."/>
            <person name="Posfai G."/>
            <person name="Hackett J."/>
            <person name="Klink S."/>
            <person name="Boutin A."/>
            <person name="Shao Y."/>
            <person name="Miller L."/>
            <person name="Grotbeck E.J."/>
            <person name="Davis N.W."/>
            <person name="Lim A."/>
            <person name="Dimalanta E.T."/>
            <person name="Potamousis K."/>
            <person name="Apodaca J."/>
            <person name="Anantharaman T.S."/>
            <person name="Lin J."/>
            <person name="Yen G."/>
            <person name="Schwartz D.C."/>
            <person name="Welch R.A."/>
            <person name="Blattner F.R."/>
        </authorList>
    </citation>
    <scope>NUCLEOTIDE SEQUENCE [LARGE SCALE GENOMIC DNA]</scope>
    <source>
        <strain>O157:H7 / EDL933 / ATCC 700927 / EHEC</strain>
    </source>
</reference>
<reference key="2">
    <citation type="journal article" date="2001" name="DNA Res.">
        <title>Complete genome sequence of enterohemorrhagic Escherichia coli O157:H7 and genomic comparison with a laboratory strain K-12.</title>
        <authorList>
            <person name="Hayashi T."/>
            <person name="Makino K."/>
            <person name="Ohnishi M."/>
            <person name="Kurokawa K."/>
            <person name="Ishii K."/>
            <person name="Yokoyama K."/>
            <person name="Han C.-G."/>
            <person name="Ohtsubo E."/>
            <person name="Nakayama K."/>
            <person name="Murata T."/>
            <person name="Tanaka M."/>
            <person name="Tobe T."/>
            <person name="Iida T."/>
            <person name="Takami H."/>
            <person name="Honda T."/>
            <person name="Sasakawa C."/>
            <person name="Ogasawara N."/>
            <person name="Yasunaga T."/>
            <person name="Kuhara S."/>
            <person name="Shiba T."/>
            <person name="Hattori M."/>
            <person name="Shinagawa H."/>
        </authorList>
    </citation>
    <scope>NUCLEOTIDE SEQUENCE [LARGE SCALE GENOMIC DNA]</scope>
    <source>
        <strain>O157:H7 / Sakai / RIMD 0509952 / EHEC</strain>
    </source>
</reference>
<comment type="function">
    <text evidence="1">Seems to be required for the conversion of a precursor form of the large subunit of hydrogenlyase (HycE) into a mature form.</text>
</comment>
<comment type="similarity">
    <text evidence="2">To E.coli HyfJ.</text>
</comment>
<organism>
    <name type="scientific">Escherichia coli O157:H7</name>
    <dbReference type="NCBI Taxonomy" id="83334"/>
    <lineage>
        <taxon>Bacteria</taxon>
        <taxon>Pseudomonadati</taxon>
        <taxon>Pseudomonadota</taxon>
        <taxon>Gammaproteobacteria</taxon>
        <taxon>Enterobacterales</taxon>
        <taxon>Enterobacteriaceae</taxon>
        <taxon>Escherichia</taxon>
    </lineage>
</organism>